<evidence type="ECO:0000255" key="1">
    <source>
        <dbReference type="HAMAP-Rule" id="MF_00111"/>
    </source>
</evidence>
<reference key="1">
    <citation type="journal article" date="2002" name="Nature">
        <title>Comparison of the genomes of two Xanthomonas pathogens with differing host specificities.</title>
        <authorList>
            <person name="da Silva A.C.R."/>
            <person name="Ferro J.A."/>
            <person name="Reinach F.C."/>
            <person name="Farah C.S."/>
            <person name="Furlan L.R."/>
            <person name="Quaggio R.B."/>
            <person name="Monteiro-Vitorello C.B."/>
            <person name="Van Sluys M.A."/>
            <person name="Almeida N.F. Jr."/>
            <person name="Alves L.M.C."/>
            <person name="do Amaral A.M."/>
            <person name="Bertolini M.C."/>
            <person name="Camargo L.E.A."/>
            <person name="Camarotte G."/>
            <person name="Cannavan F."/>
            <person name="Cardozo J."/>
            <person name="Chambergo F."/>
            <person name="Ciapina L.P."/>
            <person name="Cicarelli R.M.B."/>
            <person name="Coutinho L.L."/>
            <person name="Cursino-Santos J.R."/>
            <person name="El-Dorry H."/>
            <person name="Faria J.B."/>
            <person name="Ferreira A.J.S."/>
            <person name="Ferreira R.C.C."/>
            <person name="Ferro M.I.T."/>
            <person name="Formighieri E.F."/>
            <person name="Franco M.C."/>
            <person name="Greggio C.C."/>
            <person name="Gruber A."/>
            <person name="Katsuyama A.M."/>
            <person name="Kishi L.T."/>
            <person name="Leite R.P."/>
            <person name="Lemos E.G.M."/>
            <person name="Lemos M.V.F."/>
            <person name="Locali E.C."/>
            <person name="Machado M.A."/>
            <person name="Madeira A.M.B.N."/>
            <person name="Martinez-Rossi N.M."/>
            <person name="Martins E.C."/>
            <person name="Meidanis J."/>
            <person name="Menck C.F.M."/>
            <person name="Miyaki C.Y."/>
            <person name="Moon D.H."/>
            <person name="Moreira L.M."/>
            <person name="Novo M.T.M."/>
            <person name="Okura V.K."/>
            <person name="Oliveira M.C."/>
            <person name="Oliveira V.R."/>
            <person name="Pereira H.A."/>
            <person name="Rossi A."/>
            <person name="Sena J.A.D."/>
            <person name="Silva C."/>
            <person name="de Souza R.F."/>
            <person name="Spinola L.A.F."/>
            <person name="Takita M.A."/>
            <person name="Tamura R.E."/>
            <person name="Teixeira E.C."/>
            <person name="Tezza R.I.D."/>
            <person name="Trindade dos Santos M."/>
            <person name="Truffi D."/>
            <person name="Tsai S.M."/>
            <person name="White F.F."/>
            <person name="Setubal J.C."/>
            <person name="Kitajima J.P."/>
        </authorList>
    </citation>
    <scope>NUCLEOTIDE SEQUENCE [LARGE SCALE GENOMIC DNA]</scope>
    <source>
        <strain>306</strain>
    </source>
</reference>
<keyword id="KW-0131">Cell cycle</keyword>
<keyword id="KW-0132">Cell division</keyword>
<keyword id="KW-0133">Cell shape</keyword>
<keyword id="KW-0961">Cell wall biogenesis/degradation</keyword>
<keyword id="KW-0963">Cytoplasm</keyword>
<keyword id="KW-0573">Peptidoglycan synthesis</keyword>
<keyword id="KW-0670">Pyruvate</keyword>
<keyword id="KW-0808">Transferase</keyword>
<accession>Q8PID3</accession>
<dbReference type="EC" id="2.5.1.7" evidence="1"/>
<dbReference type="EMBL" id="AE008923">
    <property type="protein sequence ID" value="AAM37810.1"/>
    <property type="molecule type" value="Genomic_DNA"/>
</dbReference>
<dbReference type="RefSeq" id="WP_003487825.1">
    <property type="nucleotide sequence ID" value="NC_003919.1"/>
</dbReference>
<dbReference type="SMR" id="Q8PID3"/>
<dbReference type="GeneID" id="66912040"/>
<dbReference type="KEGG" id="xac:XAC2965"/>
<dbReference type="eggNOG" id="COG0766">
    <property type="taxonomic scope" value="Bacteria"/>
</dbReference>
<dbReference type="HOGENOM" id="CLU_027387_0_0_6"/>
<dbReference type="UniPathway" id="UPA00219"/>
<dbReference type="Proteomes" id="UP000000576">
    <property type="component" value="Chromosome"/>
</dbReference>
<dbReference type="GO" id="GO:0005737">
    <property type="term" value="C:cytoplasm"/>
    <property type="evidence" value="ECO:0007669"/>
    <property type="project" value="UniProtKB-SubCell"/>
</dbReference>
<dbReference type="GO" id="GO:0008760">
    <property type="term" value="F:UDP-N-acetylglucosamine 1-carboxyvinyltransferase activity"/>
    <property type="evidence" value="ECO:0007669"/>
    <property type="project" value="UniProtKB-UniRule"/>
</dbReference>
<dbReference type="GO" id="GO:0051301">
    <property type="term" value="P:cell division"/>
    <property type="evidence" value="ECO:0007669"/>
    <property type="project" value="UniProtKB-KW"/>
</dbReference>
<dbReference type="GO" id="GO:0071555">
    <property type="term" value="P:cell wall organization"/>
    <property type="evidence" value="ECO:0007669"/>
    <property type="project" value="UniProtKB-KW"/>
</dbReference>
<dbReference type="GO" id="GO:0009252">
    <property type="term" value="P:peptidoglycan biosynthetic process"/>
    <property type="evidence" value="ECO:0007669"/>
    <property type="project" value="UniProtKB-UniRule"/>
</dbReference>
<dbReference type="GO" id="GO:0008360">
    <property type="term" value="P:regulation of cell shape"/>
    <property type="evidence" value="ECO:0007669"/>
    <property type="project" value="UniProtKB-KW"/>
</dbReference>
<dbReference type="GO" id="GO:0019277">
    <property type="term" value="P:UDP-N-acetylgalactosamine biosynthetic process"/>
    <property type="evidence" value="ECO:0007669"/>
    <property type="project" value="InterPro"/>
</dbReference>
<dbReference type="CDD" id="cd01555">
    <property type="entry name" value="UdpNAET"/>
    <property type="match status" value="1"/>
</dbReference>
<dbReference type="FunFam" id="3.65.10.10:FF:000002">
    <property type="entry name" value="UDP-N-acetylglucosamine 1-carboxyvinyltransferase"/>
    <property type="match status" value="1"/>
</dbReference>
<dbReference type="Gene3D" id="3.65.10.10">
    <property type="entry name" value="Enolpyruvate transferase domain"/>
    <property type="match status" value="2"/>
</dbReference>
<dbReference type="HAMAP" id="MF_00111">
    <property type="entry name" value="MurA"/>
    <property type="match status" value="1"/>
</dbReference>
<dbReference type="InterPro" id="IPR001986">
    <property type="entry name" value="Enolpyruvate_Tfrase_dom"/>
</dbReference>
<dbReference type="InterPro" id="IPR036968">
    <property type="entry name" value="Enolpyruvate_Tfrase_sf"/>
</dbReference>
<dbReference type="InterPro" id="IPR050068">
    <property type="entry name" value="MurA_subfamily"/>
</dbReference>
<dbReference type="InterPro" id="IPR013792">
    <property type="entry name" value="RNA3'P_cycl/enolpyr_Trfase_a/b"/>
</dbReference>
<dbReference type="InterPro" id="IPR005750">
    <property type="entry name" value="UDP_GlcNAc_COvinyl_MurA"/>
</dbReference>
<dbReference type="NCBIfam" id="TIGR01072">
    <property type="entry name" value="murA"/>
    <property type="match status" value="1"/>
</dbReference>
<dbReference type="NCBIfam" id="NF006873">
    <property type="entry name" value="PRK09369.1"/>
    <property type="match status" value="1"/>
</dbReference>
<dbReference type="PANTHER" id="PTHR43783">
    <property type="entry name" value="UDP-N-ACETYLGLUCOSAMINE 1-CARBOXYVINYLTRANSFERASE"/>
    <property type="match status" value="1"/>
</dbReference>
<dbReference type="PANTHER" id="PTHR43783:SF1">
    <property type="entry name" value="UDP-N-ACETYLGLUCOSAMINE 1-CARBOXYVINYLTRANSFERASE"/>
    <property type="match status" value="1"/>
</dbReference>
<dbReference type="Pfam" id="PF00275">
    <property type="entry name" value="EPSP_synthase"/>
    <property type="match status" value="1"/>
</dbReference>
<dbReference type="SUPFAM" id="SSF55205">
    <property type="entry name" value="EPT/RTPC-like"/>
    <property type="match status" value="1"/>
</dbReference>
<sequence length="424" mass="44441">MAKIVVTGGQALHGEVHISGAKNAVLPILCATLLADAPVEISNVPHLHDVITTVKLLSELGAEVTIDEGTLAKGRSMLVDPRSVTHQVAPYELVKTMRASILVLGPLLARYGTAEVSLPGGCAIGSRPVDQHIKGLQALGADISVENGYIKATSNGRLKGARYVFDMVSVTGTENVLMAAVLAEGTTVLENAAMEPEVTDLADCLIALGARIEGAGTPRIVVQGVERLGGGHHAVLPDRIETGTFLVAAAMTGGSVTVRRARPETLDAVLDKLTEAGATITTTADSITLDMQGKRPRAVSLTTAPYPAFPTDMQAQFMALNCVADGVGVINETIFENRFMHVNELLRLGADIQVEGHTAIVRGAERLSGAPVMATDLRASASLILAGLVADGDTTIDRIYHLDRGYENIEEKLGALGATIQRTA</sequence>
<organism>
    <name type="scientific">Xanthomonas axonopodis pv. citri (strain 306)</name>
    <dbReference type="NCBI Taxonomy" id="190486"/>
    <lineage>
        <taxon>Bacteria</taxon>
        <taxon>Pseudomonadati</taxon>
        <taxon>Pseudomonadota</taxon>
        <taxon>Gammaproteobacteria</taxon>
        <taxon>Lysobacterales</taxon>
        <taxon>Lysobacteraceae</taxon>
        <taxon>Xanthomonas</taxon>
    </lineage>
</organism>
<feature type="chain" id="PRO_0000178953" description="UDP-N-acetylglucosamine 1-carboxyvinyltransferase">
    <location>
        <begin position="1"/>
        <end position="424"/>
    </location>
</feature>
<feature type="active site" description="Proton donor" evidence="1">
    <location>
        <position position="122"/>
    </location>
</feature>
<feature type="binding site" evidence="1">
    <location>
        <begin position="22"/>
        <end position="23"/>
    </location>
    <ligand>
        <name>phosphoenolpyruvate</name>
        <dbReference type="ChEBI" id="CHEBI:58702"/>
    </ligand>
</feature>
<feature type="binding site" evidence="1">
    <location>
        <position position="98"/>
    </location>
    <ligand>
        <name>UDP-N-acetyl-alpha-D-glucosamine</name>
        <dbReference type="ChEBI" id="CHEBI:57705"/>
    </ligand>
</feature>
<feature type="binding site" evidence="1">
    <location>
        <begin position="127"/>
        <end position="131"/>
    </location>
    <ligand>
        <name>UDP-N-acetyl-alpha-D-glucosamine</name>
        <dbReference type="ChEBI" id="CHEBI:57705"/>
    </ligand>
</feature>
<feature type="binding site" evidence="1">
    <location>
        <position position="312"/>
    </location>
    <ligand>
        <name>UDP-N-acetyl-alpha-D-glucosamine</name>
        <dbReference type="ChEBI" id="CHEBI:57705"/>
    </ligand>
</feature>
<feature type="binding site" evidence="1">
    <location>
        <position position="334"/>
    </location>
    <ligand>
        <name>UDP-N-acetyl-alpha-D-glucosamine</name>
        <dbReference type="ChEBI" id="CHEBI:57705"/>
    </ligand>
</feature>
<feature type="modified residue" description="2-(S-cysteinyl)pyruvic acid O-phosphothioketal" evidence="1">
    <location>
        <position position="122"/>
    </location>
</feature>
<name>MURA_XANAC</name>
<comment type="function">
    <text evidence="1">Cell wall formation. Adds enolpyruvyl to UDP-N-acetylglucosamine.</text>
</comment>
<comment type="catalytic activity">
    <reaction evidence="1">
        <text>phosphoenolpyruvate + UDP-N-acetyl-alpha-D-glucosamine = UDP-N-acetyl-3-O-(1-carboxyvinyl)-alpha-D-glucosamine + phosphate</text>
        <dbReference type="Rhea" id="RHEA:18681"/>
        <dbReference type="ChEBI" id="CHEBI:43474"/>
        <dbReference type="ChEBI" id="CHEBI:57705"/>
        <dbReference type="ChEBI" id="CHEBI:58702"/>
        <dbReference type="ChEBI" id="CHEBI:68483"/>
        <dbReference type="EC" id="2.5.1.7"/>
    </reaction>
</comment>
<comment type="pathway">
    <text evidence="1">Cell wall biogenesis; peptidoglycan biosynthesis.</text>
</comment>
<comment type="subcellular location">
    <subcellularLocation>
        <location evidence="1">Cytoplasm</location>
    </subcellularLocation>
</comment>
<comment type="similarity">
    <text evidence="1">Belongs to the EPSP synthase family. MurA subfamily.</text>
</comment>
<protein>
    <recommendedName>
        <fullName evidence="1">UDP-N-acetylglucosamine 1-carboxyvinyltransferase</fullName>
        <ecNumber evidence="1">2.5.1.7</ecNumber>
    </recommendedName>
    <alternativeName>
        <fullName evidence="1">Enoylpyruvate transferase</fullName>
    </alternativeName>
    <alternativeName>
        <fullName evidence="1">UDP-N-acetylglucosamine enolpyruvyl transferase</fullName>
        <shortName evidence="1">EPT</shortName>
    </alternativeName>
</protein>
<gene>
    <name evidence="1" type="primary">murA</name>
    <name type="ordered locus">XAC2965</name>
</gene>
<proteinExistence type="inferred from homology"/>